<name>RB6I2_RAT</name>
<comment type="function">
    <text evidence="1">Regulatory subunit of the IKK complex. Probably recruits IkappaBalpha/NFKBIA to the complex (By similarity). May be involved in the organization of the cytomatrix at the nerve terminals active zone (CAZ) which regulates neurotransmitter release. May be involved in vesicle trafficking at the CAZ. May be involved in Rab-6 regulated endosomes to Golgi transport.</text>
</comment>
<comment type="subunit">
    <text evidence="1 2 6 7 8">Interacts with the GTB-bound forms of RAB6A isoform 1 and isoform 2 and with RAB6B. The interaction was strongest with RAB6B, followed by RAB6A isoform 2 and weakest with RAB6A isoform 1 (By similarity). Part of a complex with CHUK, IKBKB and IKBKG. Interacts with CHUK, IKBKB and IKBKG. The interaction with IKBKG is independent of CHUK and IKBKB. Interacts with NFKBIA (By similarity). Isoform 1 interacts through its C-terminus with the PDZ domains of RIMS1 and RIMS2. Interacts with ERC2/CAST1. Interacts with SDCCAG8. Part of a cortical microtubule stabilization complex (CMSC) composed of KANK1, PPFIA1, PPFIBP1, ERC1/ELKS, PHLDB2/LL5beta, CLASPs, KIF21A and possibly additional interactors; within CMSCs KANK1 and PHLDB2/LL5beta appear to be the core components for targeting of microtubule-binding proteins KIF21A and CLASPs, whereas PPFIA1, PPFIBP1 and ERC1/ELKS serve as scaffolds for protein clustering.</text>
</comment>
<comment type="interaction">
    <interactant intactId="EBI-3507502">
        <id>Q811U3</id>
    </interactant>
    <interactant intactId="EBI-3507436">
        <id>Q9JIR4</id>
        <label>Rims1</label>
    </interactant>
    <organismsDiffer>false</organismsDiffer>
    <experiments>8</experiments>
</comment>
<comment type="subcellular location">
    <subcellularLocation>
        <location evidence="2">Cytoplasm</location>
        <location evidence="2">Cytoskeleton</location>
        <location evidence="2">Microtubule organizing center</location>
        <location evidence="2">Centrosome</location>
    </subcellularLocation>
    <subcellularLocation>
        <location evidence="6">Cytoplasm</location>
    </subcellularLocation>
    <subcellularLocation>
        <location evidence="1">Membrane</location>
        <topology evidence="1">Peripheral membrane protein</topology>
    </subcellularLocation>
    <subcellularLocation>
        <location evidence="1">Golgi apparatus membrane</location>
        <topology evidence="1">Peripheral membrane protein</topology>
    </subcellularLocation>
    <subcellularLocation>
        <location evidence="6">Presynaptic active zone</location>
    </subcellularLocation>
    <subcellularLocation>
        <location evidence="3">Cell projection</location>
        <location evidence="3">Podosome</location>
    </subcellularLocation>
    <text evidence="1 3">Recruited on Golgi membranes by RAB6A in a GTP-dependent manner. Localized to the cortex of myotube podosomes (By similarity).</text>
</comment>
<comment type="alternative products">
    <event type="alternative splicing"/>
    <isoform>
        <id>Q811U3-1</id>
        <name>1</name>
        <name>CAST2a</name>
        <name>ERC1b</name>
        <sequence type="displayed"/>
    </isoform>
    <text>Additional isoforms seem to exist.</text>
</comment>
<comment type="tissue specificity">
    <text evidence="6">Isoform 1 is specifically expressed in brain. A further probable isoform is widely expressed outside of brain It is referred to as ERC1a by PubMed:12391317 and characterized by a C-terminus identical to that of isoforms 1 in human and mouse.</text>
</comment>
<reference key="1">
    <citation type="journal article" date="2004" name="Genes Cells">
        <title>CAST2: identification and characterization of a protein structurally related to the presynaptic cytomatrix protein CAST.</title>
        <authorList>
            <person name="Deguchi-Tawarada M."/>
            <person name="Inoue E."/>
            <person name="Takao-Rikitsu E."/>
            <person name="Inoue M."/>
            <person name="Ohtsuka T."/>
            <person name="Takai Y."/>
        </authorList>
    </citation>
    <scope>NUCLEOTIDE SEQUENCE [MRNA]</scope>
    <scope>INTERACTION WITH RIMS1 AND CAST1</scope>
    <source>
        <strain>Sprague-Dawley</strain>
    </source>
</reference>
<reference key="2">
    <citation type="journal article" date="2002" name="Proc. Natl. Acad. Sci. U.S.A.">
        <title>A family of RIM-binding proteins regulated by alternative splicing: Implications for the genesis of synaptic active zones.</title>
        <authorList>
            <person name="Wang Y."/>
            <person name="Liu X."/>
            <person name="Biederer T."/>
            <person name="Suedhof T.C."/>
        </authorList>
    </citation>
    <scope>NUCLEOTIDE SEQUENCE [MRNA]</scope>
    <scope>ALTERNATIVE SPLICING</scope>
    <scope>TISSUE SPECIFICITY</scope>
    <scope>SUBCELLULAR LOCATION</scope>
    <scope>INTERACTION WITH RIMS1 AND RIMS2</scope>
    <scope>MUTAGENESIS OF GLU-943; GLU-944; GLY-945; ILE-946; TRP-947 AND ALA-948</scope>
</reference>
<reference key="3">
    <citation type="journal article" date="2012" name="Nat. Commun.">
        <title>Quantitative maps of protein phosphorylation sites across 14 different rat organs and tissues.</title>
        <authorList>
            <person name="Lundby A."/>
            <person name="Secher A."/>
            <person name="Lage K."/>
            <person name="Nordsborg N.B."/>
            <person name="Dmytriyev A."/>
            <person name="Lundby C."/>
            <person name="Olsen J.V."/>
        </authorList>
    </citation>
    <scope>PHOSPHORYLATION [LARGE SCALE ANALYSIS] AT SER-937</scope>
    <scope>IDENTIFICATION BY MASS SPECTROMETRY [LARGE SCALE ANALYSIS]</scope>
</reference>
<reference key="4">
    <citation type="journal article" date="2005" name="J. Mol. Biol.">
        <title>Solution structure of the RIM1alpha PDZ domain in complex with an ELKS1b C-terminal peptide.</title>
        <authorList>
            <person name="Lu J."/>
            <person name="Li H."/>
            <person name="Wang Y."/>
            <person name="Sudhof T.C."/>
            <person name="Rizo J."/>
        </authorList>
    </citation>
    <scope>STRUCTURE BY NMR OF 939-948 IN COMPLEX WITH RIMS1</scope>
    <scope>INTERACTION WITH RIMS1</scope>
</reference>
<accession>Q811U3</accession>
<accession>Q8CIY9</accession>
<dbReference type="EMBL" id="AY174115">
    <property type="protein sequence ID" value="AAO25554.1"/>
    <property type="molecule type" value="mRNA"/>
</dbReference>
<dbReference type="EMBL" id="AF541926">
    <property type="protein sequence ID" value="AAN39293.1"/>
    <property type="molecule type" value="mRNA"/>
</dbReference>
<dbReference type="RefSeq" id="NP_740769.2">
    <property type="nucleotide sequence ID" value="NM_170788.2"/>
</dbReference>
<dbReference type="PDB" id="1ZUB">
    <property type="method" value="NMR"/>
    <property type="chains" value="B=939-948"/>
</dbReference>
<dbReference type="PDB" id="8I3E">
    <property type="method" value="X-ray"/>
    <property type="resolution" value="2.70 A"/>
    <property type="chains" value="A/B=469-610"/>
</dbReference>
<dbReference type="PDB" id="8IJ9">
    <property type="method" value="X-ray"/>
    <property type="resolution" value="2.04 A"/>
    <property type="chains" value="C/D=849-922"/>
</dbReference>
<dbReference type="PDBsum" id="1ZUB"/>
<dbReference type="PDBsum" id="8I3E"/>
<dbReference type="PDBsum" id="8IJ9"/>
<dbReference type="SMR" id="Q811U3"/>
<dbReference type="BioGRID" id="251829">
    <property type="interactions" value="1"/>
</dbReference>
<dbReference type="ELM" id="Q811U3"/>
<dbReference type="FunCoup" id="Q811U3">
    <property type="interactions" value="1826"/>
</dbReference>
<dbReference type="IntAct" id="Q811U3">
    <property type="interactions" value="3"/>
</dbReference>
<dbReference type="MINT" id="Q811U3"/>
<dbReference type="STRING" id="10116.ENSRNOP00000070778"/>
<dbReference type="GlyGen" id="Q811U3">
    <property type="glycosylation" value="1 site, 1 O-linked glycan (1 site)"/>
</dbReference>
<dbReference type="iPTMnet" id="Q811U3"/>
<dbReference type="PhosphoSitePlus" id="Q811U3"/>
<dbReference type="PaxDb" id="10116-ENSRNOP00000012397"/>
<dbReference type="UCSC" id="RGD:628733">
    <molecule id="Q811U3-1"/>
    <property type="organism name" value="rat"/>
</dbReference>
<dbReference type="AGR" id="RGD:628733"/>
<dbReference type="RGD" id="628733">
    <property type="gene designation" value="Erc1"/>
</dbReference>
<dbReference type="eggNOG" id="KOG4809">
    <property type="taxonomic scope" value="Eukaryota"/>
</dbReference>
<dbReference type="InParanoid" id="Q811U3"/>
<dbReference type="CD-CODE" id="F9F240AC">
    <property type="entry name" value="Presynaptic clusters"/>
</dbReference>
<dbReference type="EvolutionaryTrace" id="Q811U3"/>
<dbReference type="PRO" id="PR:Q811U3"/>
<dbReference type="Proteomes" id="UP000002494">
    <property type="component" value="Unplaced"/>
</dbReference>
<dbReference type="GO" id="GO:0070161">
    <property type="term" value="C:anchoring junction"/>
    <property type="evidence" value="ECO:0007669"/>
    <property type="project" value="UniProtKB-KW"/>
</dbReference>
<dbReference type="GO" id="GO:0005813">
    <property type="term" value="C:centrosome"/>
    <property type="evidence" value="ECO:0000266"/>
    <property type="project" value="RGD"/>
</dbReference>
<dbReference type="GO" id="GO:0036064">
    <property type="term" value="C:ciliary basal body"/>
    <property type="evidence" value="ECO:0000266"/>
    <property type="project" value="RGD"/>
</dbReference>
<dbReference type="GO" id="GO:0005737">
    <property type="term" value="C:cytoplasm"/>
    <property type="evidence" value="ECO:0000250"/>
    <property type="project" value="ParkinsonsUK-UCL"/>
</dbReference>
<dbReference type="GO" id="GO:0098982">
    <property type="term" value="C:GABA-ergic synapse"/>
    <property type="evidence" value="ECO:0000266"/>
    <property type="project" value="RGD"/>
</dbReference>
<dbReference type="GO" id="GO:0098978">
    <property type="term" value="C:glutamatergic synapse"/>
    <property type="evidence" value="ECO:0000266"/>
    <property type="project" value="RGD"/>
</dbReference>
<dbReference type="GO" id="GO:0000139">
    <property type="term" value="C:Golgi membrane"/>
    <property type="evidence" value="ECO:0007669"/>
    <property type="project" value="UniProtKB-SubCell"/>
</dbReference>
<dbReference type="GO" id="GO:0008385">
    <property type="term" value="C:IkappaB kinase complex"/>
    <property type="evidence" value="ECO:0000266"/>
    <property type="project" value="RGD"/>
</dbReference>
<dbReference type="GO" id="GO:0016020">
    <property type="term" value="C:membrane"/>
    <property type="evidence" value="ECO:0000314"/>
    <property type="project" value="ARUK-UCL"/>
</dbReference>
<dbReference type="GO" id="GO:0002102">
    <property type="term" value="C:podosome"/>
    <property type="evidence" value="ECO:0000250"/>
    <property type="project" value="UniProtKB"/>
</dbReference>
<dbReference type="GO" id="GO:0014069">
    <property type="term" value="C:postsynaptic density"/>
    <property type="evidence" value="ECO:0000314"/>
    <property type="project" value="ARUK-UCL"/>
</dbReference>
<dbReference type="GO" id="GO:0098831">
    <property type="term" value="C:presynaptic active zone cytoplasmic component"/>
    <property type="evidence" value="ECO:0000314"/>
    <property type="project" value="SynGO"/>
</dbReference>
<dbReference type="GO" id="GO:0099523">
    <property type="term" value="C:presynaptic cytosol"/>
    <property type="evidence" value="ECO:0000266"/>
    <property type="project" value="RGD"/>
</dbReference>
<dbReference type="GO" id="GO:0045202">
    <property type="term" value="C:synapse"/>
    <property type="evidence" value="ECO:0000250"/>
    <property type="project" value="ParkinsonsUK-UCL"/>
</dbReference>
<dbReference type="GO" id="GO:0008021">
    <property type="term" value="C:synaptic vesicle"/>
    <property type="evidence" value="ECO:0000314"/>
    <property type="project" value="ARUK-UCL"/>
</dbReference>
<dbReference type="GO" id="GO:0030165">
    <property type="term" value="F:PDZ domain binding"/>
    <property type="evidence" value="ECO:0000314"/>
    <property type="project" value="RGD"/>
</dbReference>
<dbReference type="GO" id="GO:0031267">
    <property type="term" value="F:small GTPase binding"/>
    <property type="evidence" value="ECO:0000250"/>
    <property type="project" value="ParkinsonsUK-UCL"/>
</dbReference>
<dbReference type="GO" id="GO:0098882">
    <property type="term" value="F:structural constituent of presynaptic active zone"/>
    <property type="evidence" value="ECO:0000266"/>
    <property type="project" value="RGD"/>
</dbReference>
<dbReference type="GO" id="GO:0048790">
    <property type="term" value="P:maintenance of presynaptic active zone structure"/>
    <property type="evidence" value="ECO:0000318"/>
    <property type="project" value="GO_Central"/>
</dbReference>
<dbReference type="GO" id="GO:0015031">
    <property type="term" value="P:protein transport"/>
    <property type="evidence" value="ECO:0007669"/>
    <property type="project" value="UniProtKB-KW"/>
</dbReference>
<dbReference type="GO" id="GO:0150037">
    <property type="term" value="P:regulation of calcium-dependent activation of synaptic vesicle fusion"/>
    <property type="evidence" value="ECO:0000266"/>
    <property type="project" value="RGD"/>
</dbReference>
<dbReference type="GO" id="GO:0006355">
    <property type="term" value="P:regulation of DNA-templated transcription"/>
    <property type="evidence" value="ECO:0000266"/>
    <property type="project" value="RGD"/>
</dbReference>
<dbReference type="GO" id="GO:0099509">
    <property type="term" value="P:regulation of presynaptic cytosolic calcium ion concentration"/>
    <property type="evidence" value="ECO:0000266"/>
    <property type="project" value="RGD"/>
</dbReference>
<dbReference type="GO" id="GO:0042147">
    <property type="term" value="P:retrograde transport, endosome to Golgi"/>
    <property type="evidence" value="ECO:0000250"/>
    <property type="project" value="ParkinsonsUK-UCL"/>
</dbReference>
<dbReference type="GO" id="GO:0016082">
    <property type="term" value="P:synaptic vesicle priming"/>
    <property type="evidence" value="ECO:0000266"/>
    <property type="project" value="RGD"/>
</dbReference>
<dbReference type="Gene3D" id="1.10.287.1490">
    <property type="match status" value="1"/>
</dbReference>
<dbReference type="InterPro" id="IPR019323">
    <property type="entry name" value="ELKS/CAST"/>
</dbReference>
<dbReference type="PANTHER" id="PTHR18861">
    <property type="entry name" value="ELKS/RAB6-INTERACTING/CAST PROTEIN"/>
    <property type="match status" value="1"/>
</dbReference>
<dbReference type="PANTHER" id="PTHR18861:SF1">
    <property type="entry name" value="ELKS_RAB6-INTERACTING_CAST FAMILY MEMBER 1"/>
    <property type="match status" value="1"/>
</dbReference>
<dbReference type="Pfam" id="PF10174">
    <property type="entry name" value="Cast"/>
    <property type="match status" value="1"/>
</dbReference>
<dbReference type="SUPFAM" id="SSF57997">
    <property type="entry name" value="Tropomyosin"/>
    <property type="match status" value="1"/>
</dbReference>
<gene>
    <name type="primary">Erc1</name>
    <name type="synonym">Cast2</name>
    <name type="synonym">Elks</name>
    <name type="synonym">Rab6ip2</name>
</gene>
<proteinExistence type="evidence at protein level"/>
<keyword id="KW-0002">3D-structure</keyword>
<keyword id="KW-0007">Acetylation</keyword>
<keyword id="KW-0025">Alternative splicing</keyword>
<keyword id="KW-0965">Cell junction</keyword>
<keyword id="KW-0966">Cell projection</keyword>
<keyword id="KW-0175">Coiled coil</keyword>
<keyword id="KW-0963">Cytoplasm</keyword>
<keyword id="KW-0206">Cytoskeleton</keyword>
<keyword id="KW-0333">Golgi apparatus</keyword>
<keyword id="KW-0472">Membrane</keyword>
<keyword id="KW-0597">Phosphoprotein</keyword>
<keyword id="KW-0653">Protein transport</keyword>
<keyword id="KW-1185">Reference proteome</keyword>
<keyword id="KW-0770">Synapse</keyword>
<keyword id="KW-0813">Transport</keyword>
<sequence>MYGSARSVGKVEPSSQSPGRSPRLPRSPRLGHRRTNSTGGSSGNSVGGGSGKTLSMENIQSLNAAYATSGPMYLSDHENVGAETPKSTMTLGRSGGRLPYGVRMTAMGSSPNIASSGVASDTIAFGEHHLPPVSMASTVPHSLRQARDNTIMDLQTQLKEVLRENDLLRKDVEVKESKLSSSMNSIKTFWSPELKKERALRKDEASKITIWKEQYRVVQEENQHMQMTIQALQDELRIQRDLNQLFQQDSSSRTGEPCVAELTEENFQRLHAEHERQAKELFLLRKTLEEMELRIETQKQTLNARDESIKKLLEMLQSKGLSAKATEEDHERTRRLAEAEMHVHHLESLLEQKEKENNMLREEMHRRFENAPDSAKTKALQTVIEMKDSKISSMERGLRDLEEEIQMLKSNGALSTEEREEEMKQMEVYRSHSKFMKNKIGQVKQELSRKDTELLALQTKLETLTNQFSDSKQHIEVLKESLTAKEQRAAILQTEVDALRLRLEEKETMLNKKTKQIQDMAEEKGTQAGEIHDLKDMLDVKERKVNVLQKKIENLQEQLRDKEKQMSSLKERVKSLQADTTNTDTALTTLEEALADKERTIERLKEQRDRDEREKQEEIDTYKKDLKDLKEKVSLLQGDLSEKEASLLDLKEHASSLASSGLKKDSRLKTLEIALEQKKEECLKMESQLKKAHEATLEARASPEMSDRIQQLEREIARYKDESSKAQTEVDRLLEILKEVENEKNDKDKKIAELESLTSRQVKDQNKKVANLKHKEQVEKKKSAQMLEEARRREDSLSDSSQQLQVEELLMAMEKVKQELESMKAKLSSTQQSLAEKETHLTNLRAERRKHLEEVLEMKQEALLAAISEKDANIALLELSSSKKKTQEEVAALKREKDRLVQQLKQQTQNRMKLMADNYEDDHFRSSRSNQTNHKPSPDQDEEEGIWA</sequence>
<evidence type="ECO:0000250" key="1"/>
<evidence type="ECO:0000250" key="2">
    <source>
        <dbReference type="UniProtKB" id="Q8IUD2"/>
    </source>
</evidence>
<evidence type="ECO:0000250" key="3">
    <source>
        <dbReference type="UniProtKB" id="Q99MI1"/>
    </source>
</evidence>
<evidence type="ECO:0000255" key="4"/>
<evidence type="ECO:0000256" key="5">
    <source>
        <dbReference type="SAM" id="MobiDB-lite"/>
    </source>
</evidence>
<evidence type="ECO:0000269" key="6">
    <source>
    </source>
</evidence>
<evidence type="ECO:0000269" key="7">
    <source>
    </source>
</evidence>
<evidence type="ECO:0000269" key="8">
    <source>
    </source>
</evidence>
<evidence type="ECO:0000305" key="9"/>
<evidence type="ECO:0007744" key="10">
    <source>
    </source>
</evidence>
<evidence type="ECO:0007829" key="11">
    <source>
        <dbReference type="PDB" id="8I3E"/>
    </source>
</evidence>
<evidence type="ECO:0007829" key="12">
    <source>
        <dbReference type="PDB" id="8IJ9"/>
    </source>
</evidence>
<protein>
    <recommendedName>
        <fullName>ELKS/Rab6-interacting/CAST family member 1</fullName>
        <shortName>ERC-1</shortName>
    </recommendedName>
    <alternativeName>
        <fullName>CAZ-associated structural protein 2</fullName>
        <shortName>CAST2</shortName>
    </alternativeName>
    <alternativeName>
        <fullName>Rab6-interacting protein 2</fullName>
    </alternativeName>
</protein>
<organism>
    <name type="scientific">Rattus norvegicus</name>
    <name type="common">Rat</name>
    <dbReference type="NCBI Taxonomy" id="10116"/>
    <lineage>
        <taxon>Eukaryota</taxon>
        <taxon>Metazoa</taxon>
        <taxon>Chordata</taxon>
        <taxon>Craniata</taxon>
        <taxon>Vertebrata</taxon>
        <taxon>Euteleostomi</taxon>
        <taxon>Mammalia</taxon>
        <taxon>Eutheria</taxon>
        <taxon>Euarchontoglires</taxon>
        <taxon>Glires</taxon>
        <taxon>Rodentia</taxon>
        <taxon>Myomorpha</taxon>
        <taxon>Muroidea</taxon>
        <taxon>Muridae</taxon>
        <taxon>Murinae</taxon>
        <taxon>Rattus</taxon>
    </lineage>
</organism>
<feature type="chain" id="PRO_0000097178" description="ELKS/Rab6-interacting/CAST family member 1">
    <location>
        <begin position="1"/>
        <end position="948"/>
    </location>
</feature>
<feature type="region of interest" description="Disordered" evidence="5">
    <location>
        <begin position="1"/>
        <end position="54"/>
    </location>
</feature>
<feature type="region of interest" description="Disordered" evidence="5">
    <location>
        <begin position="773"/>
        <end position="801"/>
    </location>
</feature>
<feature type="region of interest" description="Disordered" evidence="5">
    <location>
        <begin position="903"/>
        <end position="948"/>
    </location>
</feature>
<feature type="coiled-coil region" evidence="4">
    <location>
        <begin position="144"/>
        <end position="920"/>
    </location>
</feature>
<feature type="compositionally biased region" description="Low complexity" evidence="5">
    <location>
        <begin position="13"/>
        <end position="28"/>
    </location>
</feature>
<feature type="compositionally biased region" description="Gly residues" evidence="5">
    <location>
        <begin position="40"/>
        <end position="51"/>
    </location>
</feature>
<feature type="compositionally biased region" description="Basic and acidic residues" evidence="5">
    <location>
        <begin position="773"/>
        <end position="796"/>
    </location>
</feature>
<feature type="compositionally biased region" description="Acidic residues" evidence="5">
    <location>
        <begin position="939"/>
        <end position="948"/>
    </location>
</feature>
<feature type="modified residue" description="N6-acetyllysine" evidence="3">
    <location>
        <position position="10"/>
    </location>
</feature>
<feature type="modified residue" description="Phosphoserine" evidence="2">
    <location>
        <position position="17"/>
    </location>
</feature>
<feature type="modified residue" description="Phosphoserine" evidence="2">
    <location>
        <position position="21"/>
    </location>
</feature>
<feature type="modified residue" description="Phosphoserine" evidence="2">
    <location>
        <position position="37"/>
    </location>
</feature>
<feature type="modified residue" description="Phosphothreonine" evidence="2">
    <location>
        <position position="38"/>
    </location>
</feature>
<feature type="modified residue" description="Phosphoserine" evidence="3">
    <location>
        <position position="55"/>
    </location>
</feature>
<feature type="modified residue" description="Phosphoserine" evidence="2">
    <location>
        <position position="75"/>
    </location>
</feature>
<feature type="modified residue" description="Phosphoserine" evidence="2">
    <location>
        <position position="94"/>
    </location>
</feature>
<feature type="modified residue" description="Phosphoserine" evidence="3">
    <location>
        <position position="796"/>
    </location>
</feature>
<feature type="modified residue" description="Phosphoserine" evidence="10">
    <location>
        <position position="937"/>
    </location>
</feature>
<feature type="mutagenesis site" description="No effect on RIMS1 and RIMS2 binding." evidence="6">
    <original>E</original>
    <variation>K</variation>
    <variation>A</variation>
    <location>
        <position position="943"/>
    </location>
</feature>
<feature type="mutagenesis site" description="No effect on RIMS1 and RIMS2 binding." evidence="6">
    <original>E</original>
    <variation>K</variation>
    <variation>A</variation>
    <location>
        <position position="944"/>
    </location>
</feature>
<feature type="mutagenesis site" description="Abolishes RIMS1 and RIMS2 binding." evidence="6">
    <original>G</original>
    <variation>D</variation>
    <variation>A</variation>
    <location>
        <position position="945"/>
    </location>
</feature>
<feature type="mutagenesis site" description="Abolishes RIMS1 and RIMS2 binding." evidence="6">
    <original>I</original>
    <variation>D</variation>
    <variation>A</variation>
    <location>
        <position position="946"/>
    </location>
</feature>
<feature type="mutagenesis site" description="Abolishes RIMS1 and RIMS2 binding." evidence="6">
    <original>W</original>
    <variation>D</variation>
    <variation>A</variation>
    <location>
        <position position="947"/>
    </location>
</feature>
<feature type="mutagenesis site" description="Abolishes RIMS1 and RIMS2 binding." evidence="6">
    <original>A</original>
    <variation>D</variation>
    <location>
        <position position="948"/>
    </location>
</feature>
<feature type="mutagenesis site" description="Weakens RIMS1 and abolishes RIMS2 binding." evidence="6">
    <original>A</original>
    <variation>L</variation>
    <location>
        <position position="948"/>
    </location>
</feature>
<feature type="sequence conflict" description="In Ref. 2; AAN39293." evidence="9" ref="2">
    <original>N</original>
    <variation>S</variation>
    <location>
        <position position="771"/>
    </location>
</feature>
<feature type="helix" evidence="11">
    <location>
        <begin position="472"/>
        <end position="577"/>
    </location>
</feature>
<feature type="helix" evidence="11">
    <location>
        <begin position="580"/>
        <end position="583"/>
    </location>
</feature>
<feature type="helix" evidence="11">
    <location>
        <begin position="584"/>
        <end position="603"/>
    </location>
</feature>
<feature type="helix" evidence="12">
    <location>
        <begin position="850"/>
        <end position="879"/>
    </location>
</feature>
<feature type="helix" evidence="12">
    <location>
        <begin position="884"/>
        <end position="915"/>
    </location>
</feature>